<keyword id="KW-1035">Host cytoplasm</keyword>
<keyword id="KW-1048">Host nucleus</keyword>
<keyword id="KW-1185">Reference proteome</keyword>
<proteinExistence type="inferred from homology"/>
<evidence type="ECO:0000250" key="1"/>
<evidence type="ECO:0000305" key="2"/>
<reference key="1">
    <citation type="journal article" date="1998" name="J. Gen. Virol.">
        <title>Ten distinct circular ssDNA components, four of which encode putative replication-associated proteins, are associated with the faba bean necrotic yellows virus genome.</title>
        <authorList>
            <person name="Katul L."/>
            <person name="Timchenko T."/>
            <person name="Gronenborn B."/>
            <person name="Vetten H.J."/>
        </authorList>
    </citation>
    <scope>NUCLEOTIDE SEQUENCE [GENOMIC DNA]</scope>
</reference>
<protein>
    <recommendedName>
        <fullName>Putative nuclear shuttle protein</fullName>
    </recommendedName>
</protein>
<organism>
    <name type="scientific">Faba bean necrotic yellows virus (isolate Syrian SV292-88)</name>
    <name type="common">FBNYV</name>
    <dbReference type="NCBI Taxonomy" id="291604"/>
    <lineage>
        <taxon>Viruses</taxon>
        <taxon>Monodnaviria</taxon>
        <taxon>Shotokuvirae</taxon>
        <taxon>Cressdnaviricota</taxon>
        <taxon>Arfiviricetes</taxon>
        <taxon>Mulpavirales</taxon>
        <taxon>Nanoviridae</taxon>
        <taxon>Nanovirus</taxon>
        <taxon>Faba bean necrotic yellows virus</taxon>
    </lineage>
</organism>
<organismHost>
    <name type="scientific">Cicer arietinum</name>
    <name type="common">Chickpea</name>
    <name type="synonym">Garbanzo</name>
    <dbReference type="NCBI Taxonomy" id="3827"/>
</organismHost>
<organismHost>
    <name type="scientific">Lens culinaris</name>
    <name type="common">Lentil</name>
    <name type="synonym">Cicer lens</name>
    <dbReference type="NCBI Taxonomy" id="3864"/>
</organismHost>
<organismHost>
    <name type="scientific">Phaseolus vulgaris</name>
    <name type="common">Kidney bean</name>
    <name type="synonym">French bean</name>
    <dbReference type="NCBI Taxonomy" id="3885"/>
</organismHost>
<organismHost>
    <name type="scientific">Vicia faba</name>
    <name type="common">Broad bean</name>
    <name type="synonym">Faba vulgaris</name>
    <dbReference type="NCBI Taxonomy" id="3906"/>
</organismHost>
<accession>O91251</accession>
<comment type="function">
    <text>Putative nuclear shuttle protein.</text>
</comment>
<comment type="subcellular location">
    <subcellularLocation>
        <location evidence="1">Host nucleus</location>
    </subcellularLocation>
    <subcellularLocation>
        <location evidence="1">Host cytoplasm</location>
    </subcellularLocation>
</comment>
<comment type="similarity">
    <text evidence="2">Belongs to the nanoviridae nuclear shuttle protein family.</text>
</comment>
<gene>
    <name type="primary">DNA-N</name>
    <name type="synonym">C8</name>
</gene>
<name>NSP_FBNY2</name>
<feature type="chain" id="PRO_0000378530" description="Putative nuclear shuttle protein">
    <location>
        <begin position="1"/>
        <end position="153"/>
    </location>
</feature>
<dbReference type="EMBL" id="AJ005965">
    <property type="protein sequence ID" value="CAA06788.1"/>
    <property type="molecule type" value="Genomic_DNA"/>
</dbReference>
<dbReference type="Proteomes" id="UP001515460">
    <property type="component" value="Genome"/>
</dbReference>
<dbReference type="GO" id="GO:0030430">
    <property type="term" value="C:host cell cytoplasm"/>
    <property type="evidence" value="ECO:0007669"/>
    <property type="project" value="UniProtKB-SubCell"/>
</dbReference>
<dbReference type="GO" id="GO:0042025">
    <property type="term" value="C:host cell nucleus"/>
    <property type="evidence" value="ECO:0007669"/>
    <property type="project" value="UniProtKB-SubCell"/>
</dbReference>
<dbReference type="InterPro" id="IPR008706">
    <property type="entry name" value="Nanovirus_C8"/>
</dbReference>
<dbReference type="Pfam" id="PF05629">
    <property type="entry name" value="Nanovirus_C8"/>
    <property type="match status" value="1"/>
</dbReference>
<sequence length="153" mass="17418">MADWFSSPLKTCTHVCDFPSLAGDPQQEIMCCDSMKNKLQDSRKVLLVSCSVSFNGSFYGGNRNVRGQLQISMVEDDGVCRPIGYVPIGGYLYHNDYGYYEGTRTFNLDLESQYLKKDEDYNRKFLVSILNENGLDSQCDLKVFIVHSIRIKV</sequence>